<accession>Q6F9D9</accession>
<evidence type="ECO:0000255" key="1">
    <source>
        <dbReference type="HAMAP-Rule" id="MF_00456"/>
    </source>
</evidence>
<dbReference type="EC" id="2.7.2.11" evidence="1"/>
<dbReference type="EMBL" id="CR543861">
    <property type="protein sequence ID" value="CAG69325.1"/>
    <property type="molecule type" value="Genomic_DNA"/>
</dbReference>
<dbReference type="RefSeq" id="WP_004928679.1">
    <property type="nucleotide sequence ID" value="NC_005966.1"/>
</dbReference>
<dbReference type="SMR" id="Q6F9D9"/>
<dbReference type="STRING" id="202950.GCA_001485005_01457"/>
<dbReference type="GeneID" id="45234844"/>
<dbReference type="KEGG" id="aci:ACIAD2560"/>
<dbReference type="eggNOG" id="COG0263">
    <property type="taxonomic scope" value="Bacteria"/>
</dbReference>
<dbReference type="HOGENOM" id="CLU_025400_2_0_6"/>
<dbReference type="OrthoDB" id="9804434at2"/>
<dbReference type="BioCyc" id="ASP62977:ACIAD_RS11635-MONOMER"/>
<dbReference type="UniPathway" id="UPA00098">
    <property type="reaction ID" value="UER00359"/>
</dbReference>
<dbReference type="Proteomes" id="UP000000430">
    <property type="component" value="Chromosome"/>
</dbReference>
<dbReference type="GO" id="GO:0005829">
    <property type="term" value="C:cytosol"/>
    <property type="evidence" value="ECO:0007669"/>
    <property type="project" value="TreeGrafter"/>
</dbReference>
<dbReference type="GO" id="GO:0005524">
    <property type="term" value="F:ATP binding"/>
    <property type="evidence" value="ECO:0007669"/>
    <property type="project" value="UniProtKB-KW"/>
</dbReference>
<dbReference type="GO" id="GO:0004349">
    <property type="term" value="F:glutamate 5-kinase activity"/>
    <property type="evidence" value="ECO:0007669"/>
    <property type="project" value="UniProtKB-UniRule"/>
</dbReference>
<dbReference type="GO" id="GO:0003723">
    <property type="term" value="F:RNA binding"/>
    <property type="evidence" value="ECO:0007669"/>
    <property type="project" value="InterPro"/>
</dbReference>
<dbReference type="GO" id="GO:0055129">
    <property type="term" value="P:L-proline biosynthetic process"/>
    <property type="evidence" value="ECO:0007669"/>
    <property type="project" value="UniProtKB-UniRule"/>
</dbReference>
<dbReference type="CDD" id="cd04242">
    <property type="entry name" value="AAK_G5K_ProB"/>
    <property type="match status" value="1"/>
</dbReference>
<dbReference type="CDD" id="cd21157">
    <property type="entry name" value="PUA_G5K"/>
    <property type="match status" value="1"/>
</dbReference>
<dbReference type="FunFam" id="3.40.1160.10:FF:000018">
    <property type="entry name" value="Glutamate 5-kinase"/>
    <property type="match status" value="1"/>
</dbReference>
<dbReference type="Gene3D" id="3.40.1160.10">
    <property type="entry name" value="Acetylglutamate kinase-like"/>
    <property type="match status" value="2"/>
</dbReference>
<dbReference type="Gene3D" id="2.30.130.10">
    <property type="entry name" value="PUA domain"/>
    <property type="match status" value="1"/>
</dbReference>
<dbReference type="HAMAP" id="MF_00456">
    <property type="entry name" value="ProB"/>
    <property type="match status" value="1"/>
</dbReference>
<dbReference type="InterPro" id="IPR036393">
    <property type="entry name" value="AceGlu_kinase-like_sf"/>
</dbReference>
<dbReference type="InterPro" id="IPR001048">
    <property type="entry name" value="Asp/Glu/Uridylate_kinase"/>
</dbReference>
<dbReference type="InterPro" id="IPR041739">
    <property type="entry name" value="G5K_ProB"/>
</dbReference>
<dbReference type="InterPro" id="IPR001057">
    <property type="entry name" value="Glu/AcGlu_kinase"/>
</dbReference>
<dbReference type="InterPro" id="IPR011529">
    <property type="entry name" value="Glu_5kinase"/>
</dbReference>
<dbReference type="InterPro" id="IPR005715">
    <property type="entry name" value="Glu_5kinase/COase_Synthase"/>
</dbReference>
<dbReference type="InterPro" id="IPR019797">
    <property type="entry name" value="Glutamate_5-kinase_CS"/>
</dbReference>
<dbReference type="InterPro" id="IPR002478">
    <property type="entry name" value="PUA"/>
</dbReference>
<dbReference type="InterPro" id="IPR015947">
    <property type="entry name" value="PUA-like_sf"/>
</dbReference>
<dbReference type="InterPro" id="IPR036974">
    <property type="entry name" value="PUA_sf"/>
</dbReference>
<dbReference type="NCBIfam" id="TIGR01027">
    <property type="entry name" value="proB"/>
    <property type="match status" value="1"/>
</dbReference>
<dbReference type="PANTHER" id="PTHR43654">
    <property type="entry name" value="GLUTAMATE 5-KINASE"/>
    <property type="match status" value="1"/>
</dbReference>
<dbReference type="PANTHER" id="PTHR43654:SF1">
    <property type="entry name" value="ISOPENTENYL PHOSPHATE KINASE"/>
    <property type="match status" value="1"/>
</dbReference>
<dbReference type="Pfam" id="PF00696">
    <property type="entry name" value="AA_kinase"/>
    <property type="match status" value="1"/>
</dbReference>
<dbReference type="Pfam" id="PF01472">
    <property type="entry name" value="PUA"/>
    <property type="match status" value="1"/>
</dbReference>
<dbReference type="PIRSF" id="PIRSF000729">
    <property type="entry name" value="GK"/>
    <property type="match status" value="1"/>
</dbReference>
<dbReference type="PRINTS" id="PR00474">
    <property type="entry name" value="GLU5KINASE"/>
</dbReference>
<dbReference type="SMART" id="SM00359">
    <property type="entry name" value="PUA"/>
    <property type="match status" value="1"/>
</dbReference>
<dbReference type="SUPFAM" id="SSF53633">
    <property type="entry name" value="Carbamate kinase-like"/>
    <property type="match status" value="1"/>
</dbReference>
<dbReference type="SUPFAM" id="SSF88697">
    <property type="entry name" value="PUA domain-like"/>
    <property type="match status" value="1"/>
</dbReference>
<dbReference type="PROSITE" id="PS00902">
    <property type="entry name" value="GLUTAMATE_5_KINASE"/>
    <property type="match status" value="1"/>
</dbReference>
<dbReference type="PROSITE" id="PS50890">
    <property type="entry name" value="PUA"/>
    <property type="match status" value="1"/>
</dbReference>
<proteinExistence type="inferred from homology"/>
<keyword id="KW-0028">Amino-acid biosynthesis</keyword>
<keyword id="KW-0067">ATP-binding</keyword>
<keyword id="KW-0963">Cytoplasm</keyword>
<keyword id="KW-0418">Kinase</keyword>
<keyword id="KW-0547">Nucleotide-binding</keyword>
<keyword id="KW-0641">Proline biosynthesis</keyword>
<keyword id="KW-0808">Transferase</keyword>
<gene>
    <name evidence="1" type="primary">proB</name>
    <name type="ordered locus">ACIAD2560</name>
</gene>
<comment type="function">
    <text evidence="1">Catalyzes the transfer of a phosphate group to glutamate to form L-glutamate 5-phosphate.</text>
</comment>
<comment type="catalytic activity">
    <reaction evidence="1">
        <text>L-glutamate + ATP = L-glutamyl 5-phosphate + ADP</text>
        <dbReference type="Rhea" id="RHEA:14877"/>
        <dbReference type="ChEBI" id="CHEBI:29985"/>
        <dbReference type="ChEBI" id="CHEBI:30616"/>
        <dbReference type="ChEBI" id="CHEBI:58274"/>
        <dbReference type="ChEBI" id="CHEBI:456216"/>
        <dbReference type="EC" id="2.7.2.11"/>
    </reaction>
</comment>
<comment type="pathway">
    <text evidence="1">Amino-acid biosynthesis; L-proline biosynthesis; L-glutamate 5-semialdehyde from L-glutamate: step 1/2.</text>
</comment>
<comment type="subcellular location">
    <subcellularLocation>
        <location evidence="1">Cytoplasm</location>
    </subcellularLocation>
</comment>
<comment type="similarity">
    <text evidence="1">Belongs to the glutamate 5-kinase family.</text>
</comment>
<name>PROB_ACIAD</name>
<reference key="1">
    <citation type="journal article" date="2004" name="Nucleic Acids Res.">
        <title>Unique features revealed by the genome sequence of Acinetobacter sp. ADP1, a versatile and naturally transformation competent bacterium.</title>
        <authorList>
            <person name="Barbe V."/>
            <person name="Vallenet D."/>
            <person name="Fonknechten N."/>
            <person name="Kreimeyer A."/>
            <person name="Oztas S."/>
            <person name="Labarre L."/>
            <person name="Cruveiller S."/>
            <person name="Robert C."/>
            <person name="Duprat S."/>
            <person name="Wincker P."/>
            <person name="Ornston L.N."/>
            <person name="Weissenbach J."/>
            <person name="Marliere P."/>
            <person name="Cohen G.N."/>
            <person name="Medigue C."/>
        </authorList>
    </citation>
    <scope>NUCLEOTIDE SEQUENCE [LARGE SCALE GENOMIC DNA]</scope>
    <source>
        <strain>ATCC 33305 / BD413 / ADP1</strain>
    </source>
</reference>
<organism>
    <name type="scientific">Acinetobacter baylyi (strain ATCC 33305 / BD413 / ADP1)</name>
    <dbReference type="NCBI Taxonomy" id="62977"/>
    <lineage>
        <taxon>Bacteria</taxon>
        <taxon>Pseudomonadati</taxon>
        <taxon>Pseudomonadota</taxon>
        <taxon>Gammaproteobacteria</taxon>
        <taxon>Moraxellales</taxon>
        <taxon>Moraxellaceae</taxon>
        <taxon>Acinetobacter</taxon>
    </lineage>
</organism>
<feature type="chain" id="PRO_0000109627" description="Glutamate 5-kinase">
    <location>
        <begin position="1"/>
        <end position="377"/>
    </location>
</feature>
<feature type="domain" description="PUA" evidence="1">
    <location>
        <begin position="285"/>
        <end position="363"/>
    </location>
</feature>
<feature type="binding site" evidence="1">
    <location>
        <position position="20"/>
    </location>
    <ligand>
        <name>ATP</name>
        <dbReference type="ChEBI" id="CHEBI:30616"/>
    </ligand>
</feature>
<feature type="binding site" evidence="1">
    <location>
        <position position="60"/>
    </location>
    <ligand>
        <name>substrate</name>
    </ligand>
</feature>
<feature type="binding site" evidence="1">
    <location>
        <position position="147"/>
    </location>
    <ligand>
        <name>substrate</name>
    </ligand>
</feature>
<feature type="binding site" evidence="1">
    <location>
        <position position="159"/>
    </location>
    <ligand>
        <name>substrate</name>
    </ligand>
</feature>
<feature type="binding site" evidence="1">
    <location>
        <begin position="179"/>
        <end position="180"/>
    </location>
    <ligand>
        <name>ATP</name>
        <dbReference type="ChEBI" id="CHEBI:30616"/>
    </ligand>
</feature>
<sequence length="377" mass="40717">MIEVIDGQRQLKACKRIVVKIGSSLLTANGQGLDLDAISHWAMQIADLHNAGHEIILVSSGAVAEGMVRMKLTSRPTDLPSLQACAAIGQMGLIHTWSSVLEKHTIQTAQVLLTHDDLADRRRYLNSCDALQNLIEWRVIPVINENDTVSTDEIRFGDNDTLAAMVAGQVHADLLIILTDQQGMFDSDPRSNPNAKLLTTVNAMDDALFEMAGGGGVLGRGGMVTKVRAARLAAKSGCPTLIASGESDHVLSRLMSGELLGTLFSTDKDRITAHQQWLAAHLQTAGRLVIDAGAVEAIKQRHRSLLPVGVKAVEGHFNRGDVVECVDQSGQRVAVGRVNFSSRSAEIIKGLASDKVHQVLGEARSLEMIHRNHMAIY</sequence>
<protein>
    <recommendedName>
        <fullName evidence="1">Glutamate 5-kinase</fullName>
        <ecNumber evidence="1">2.7.2.11</ecNumber>
    </recommendedName>
    <alternativeName>
        <fullName evidence="1">Gamma-glutamyl kinase</fullName>
        <shortName evidence="1">GK</shortName>
    </alternativeName>
</protein>